<keyword id="KW-1185">Reference proteome</keyword>
<evidence type="ECO:0000255" key="1">
    <source>
        <dbReference type="PROSITE-ProRule" id="PRU00608"/>
    </source>
</evidence>
<evidence type="ECO:0000305" key="2"/>
<feature type="chain" id="PRO_0000157842" description="Uncharacterized protein SERP1413">
    <location>
        <begin position="1"/>
        <end position="172"/>
    </location>
</feature>
<feature type="domain" description="PfpI endopeptidase" evidence="1">
    <location>
        <begin position="3"/>
        <end position="171"/>
    </location>
</feature>
<organism>
    <name type="scientific">Staphylococcus epidermidis (strain ATCC 35984 / DSM 28319 / BCRC 17069 / CCUG 31568 / BM 3577 / RP62A)</name>
    <dbReference type="NCBI Taxonomy" id="176279"/>
    <lineage>
        <taxon>Bacteria</taxon>
        <taxon>Bacillati</taxon>
        <taxon>Bacillota</taxon>
        <taxon>Bacilli</taxon>
        <taxon>Bacillales</taxon>
        <taxon>Staphylococcaceae</taxon>
        <taxon>Staphylococcus</taxon>
    </lineage>
</organism>
<sequence>MAKKVAIILADEFEDIELTSPKEALENAGFETEVIGDTANHEVVGKHGEKVTVDVSIADAKPENYDALLIPGGFSPDHLRGDEEGRYGTFAKYFTKNDVPTFAICHGPLVLVDTDDLKGRTITGVINVRKDLSNAGANVVDESVVVDNNIVTSRVPDDLDDFNREIVKKLEA</sequence>
<reference key="1">
    <citation type="journal article" date="2005" name="J. Bacteriol.">
        <title>Insights on evolution of virulence and resistance from the complete genome analysis of an early methicillin-resistant Staphylococcus aureus strain and a biofilm-producing methicillin-resistant Staphylococcus epidermidis strain.</title>
        <authorList>
            <person name="Gill S.R."/>
            <person name="Fouts D.E."/>
            <person name="Archer G.L."/>
            <person name="Mongodin E.F."/>
            <person name="DeBoy R.T."/>
            <person name="Ravel J."/>
            <person name="Paulsen I.T."/>
            <person name="Kolonay J.F."/>
            <person name="Brinkac L.M."/>
            <person name="Beanan M.J."/>
            <person name="Dodson R.J."/>
            <person name="Daugherty S.C."/>
            <person name="Madupu R."/>
            <person name="Angiuoli S.V."/>
            <person name="Durkin A.S."/>
            <person name="Haft D.H."/>
            <person name="Vamathevan J.J."/>
            <person name="Khouri H."/>
            <person name="Utterback T.R."/>
            <person name="Lee C."/>
            <person name="Dimitrov G."/>
            <person name="Jiang L."/>
            <person name="Qin H."/>
            <person name="Weidman J."/>
            <person name="Tran K."/>
            <person name="Kang K.H."/>
            <person name="Hance I.R."/>
            <person name="Nelson K.E."/>
            <person name="Fraser C.M."/>
        </authorList>
    </citation>
    <scope>NUCLEOTIDE SEQUENCE [LARGE SCALE GENOMIC DNA]</scope>
    <source>
        <strain>ATCC 35984 / DSM 28319 / BCRC 17069 / CCUG 31568 / BM 3577 / RP62A</strain>
    </source>
</reference>
<gene>
    <name type="ordered locus">SERP1413</name>
</gene>
<accession>Q5HN59</accession>
<dbReference type="EMBL" id="CP000029">
    <property type="protein sequence ID" value="AAW54770.1"/>
    <property type="molecule type" value="Genomic_DNA"/>
</dbReference>
<dbReference type="RefSeq" id="WP_001830414.1">
    <property type="nucleotide sequence ID" value="NC_002976.3"/>
</dbReference>
<dbReference type="SMR" id="Q5HN59"/>
<dbReference type="STRING" id="176279.SERP1413"/>
<dbReference type="MEROPS" id="C56.001"/>
<dbReference type="KEGG" id="ser:SERP1413"/>
<dbReference type="eggNOG" id="COG0693">
    <property type="taxonomic scope" value="Bacteria"/>
</dbReference>
<dbReference type="HOGENOM" id="CLU_000445_44_4_9"/>
<dbReference type="Proteomes" id="UP000000531">
    <property type="component" value="Chromosome"/>
</dbReference>
<dbReference type="CDD" id="cd03134">
    <property type="entry name" value="GATase1_PfpI_like"/>
    <property type="match status" value="1"/>
</dbReference>
<dbReference type="Gene3D" id="3.40.50.880">
    <property type="match status" value="1"/>
</dbReference>
<dbReference type="InterPro" id="IPR006286">
    <property type="entry name" value="C56_PfpI-like"/>
</dbReference>
<dbReference type="InterPro" id="IPR029062">
    <property type="entry name" value="Class_I_gatase-like"/>
</dbReference>
<dbReference type="InterPro" id="IPR002818">
    <property type="entry name" value="DJ-1/PfpI"/>
</dbReference>
<dbReference type="NCBIfam" id="TIGR01382">
    <property type="entry name" value="PfpI"/>
    <property type="match status" value="1"/>
</dbReference>
<dbReference type="PANTHER" id="PTHR42733">
    <property type="entry name" value="DJ-1 PROTEIN"/>
    <property type="match status" value="1"/>
</dbReference>
<dbReference type="PANTHER" id="PTHR42733:SF2">
    <property type="entry name" value="DJ-1_THIJ_PFPI FAMILY PROTEIN"/>
    <property type="match status" value="1"/>
</dbReference>
<dbReference type="Pfam" id="PF01965">
    <property type="entry name" value="DJ-1_PfpI"/>
    <property type="match status" value="1"/>
</dbReference>
<dbReference type="SUPFAM" id="SSF52317">
    <property type="entry name" value="Class I glutamine amidotransferase-like"/>
    <property type="match status" value="1"/>
</dbReference>
<dbReference type="PROSITE" id="PS51276">
    <property type="entry name" value="PEPTIDASE_C56_PFPI"/>
    <property type="match status" value="1"/>
</dbReference>
<name>Y1413_STAEQ</name>
<proteinExistence type="inferred from homology"/>
<protein>
    <recommendedName>
        <fullName>Uncharacterized protein SERP1413</fullName>
    </recommendedName>
</protein>
<comment type="similarity">
    <text evidence="2">Belongs to the peptidase C56 family.</text>
</comment>